<gene>
    <name evidence="1" type="primary">rph</name>
    <name type="ordered locus">VP0177</name>
</gene>
<keyword id="KW-0548">Nucleotidyltransferase</keyword>
<keyword id="KW-0694">RNA-binding</keyword>
<keyword id="KW-0698">rRNA processing</keyword>
<keyword id="KW-0808">Transferase</keyword>
<keyword id="KW-0819">tRNA processing</keyword>
<keyword id="KW-0820">tRNA-binding</keyword>
<sequence length="238" mass="25653">MRPNDRKADQVRPIKITRNYTAYAEGSVLVEFGNTKVLCNATVEESVPRWLKGQGRGWVTAEYGMLPRATHSRTRREAANGKQGGRTMEIQRLIARSLRAVVDLQAMGEFMITVDCDVIQADGGTRTASISGASVAMADAFQHLVDSGKLKANPMKGHVAAVSVGLLGDEVLCDLEYVEDSAADTDMNVVMTEEGKMIEIQGTAEGEPFSHEQLMALLESAKVGITEIVAAQKAALAN</sequence>
<evidence type="ECO:0000255" key="1">
    <source>
        <dbReference type="HAMAP-Rule" id="MF_00564"/>
    </source>
</evidence>
<comment type="function">
    <text evidence="1">Phosphorolytic 3'-5' exoribonuclease that plays an important role in tRNA 3'-end maturation. Removes nucleotide residues following the 3'-CCA terminus of tRNAs; can also add nucleotides to the ends of RNA molecules by using nucleoside diphosphates as substrates, but this may not be physiologically important. Probably plays a role in initiation of 16S rRNA degradation (leading to ribosome degradation) during starvation.</text>
</comment>
<comment type="catalytic activity">
    <reaction evidence="1">
        <text>tRNA(n+1) + phosphate = tRNA(n) + a ribonucleoside 5'-diphosphate</text>
        <dbReference type="Rhea" id="RHEA:10628"/>
        <dbReference type="Rhea" id="RHEA-COMP:17343"/>
        <dbReference type="Rhea" id="RHEA-COMP:17344"/>
        <dbReference type="ChEBI" id="CHEBI:43474"/>
        <dbReference type="ChEBI" id="CHEBI:57930"/>
        <dbReference type="ChEBI" id="CHEBI:173114"/>
        <dbReference type="EC" id="2.7.7.56"/>
    </reaction>
</comment>
<comment type="subunit">
    <text evidence="1">Homohexameric ring arranged as a trimer of dimers.</text>
</comment>
<comment type="similarity">
    <text evidence="1">Belongs to the RNase PH family.</text>
</comment>
<accession>Q87T93</accession>
<feature type="chain" id="PRO_0000139948" description="Ribonuclease PH">
    <location>
        <begin position="1"/>
        <end position="238"/>
    </location>
</feature>
<feature type="binding site" evidence="1">
    <location>
        <position position="86"/>
    </location>
    <ligand>
        <name>phosphate</name>
        <dbReference type="ChEBI" id="CHEBI:43474"/>
        <note>substrate</note>
    </ligand>
</feature>
<feature type="binding site" evidence="1">
    <location>
        <begin position="124"/>
        <end position="126"/>
    </location>
    <ligand>
        <name>phosphate</name>
        <dbReference type="ChEBI" id="CHEBI:43474"/>
        <note>substrate</note>
    </ligand>
</feature>
<organism>
    <name type="scientific">Vibrio parahaemolyticus serotype O3:K6 (strain RIMD 2210633)</name>
    <dbReference type="NCBI Taxonomy" id="223926"/>
    <lineage>
        <taxon>Bacteria</taxon>
        <taxon>Pseudomonadati</taxon>
        <taxon>Pseudomonadota</taxon>
        <taxon>Gammaproteobacteria</taxon>
        <taxon>Vibrionales</taxon>
        <taxon>Vibrionaceae</taxon>
        <taxon>Vibrio</taxon>
    </lineage>
</organism>
<reference key="1">
    <citation type="journal article" date="2003" name="Lancet">
        <title>Genome sequence of Vibrio parahaemolyticus: a pathogenic mechanism distinct from that of V. cholerae.</title>
        <authorList>
            <person name="Makino K."/>
            <person name="Oshima K."/>
            <person name="Kurokawa K."/>
            <person name="Yokoyama K."/>
            <person name="Uda T."/>
            <person name="Tagomori K."/>
            <person name="Iijima Y."/>
            <person name="Najima M."/>
            <person name="Nakano M."/>
            <person name="Yamashita A."/>
            <person name="Kubota Y."/>
            <person name="Kimura S."/>
            <person name="Yasunaga T."/>
            <person name="Honda T."/>
            <person name="Shinagawa H."/>
            <person name="Hattori M."/>
            <person name="Iida T."/>
        </authorList>
    </citation>
    <scope>NUCLEOTIDE SEQUENCE [LARGE SCALE GENOMIC DNA]</scope>
    <source>
        <strain>RIMD 2210633</strain>
    </source>
</reference>
<protein>
    <recommendedName>
        <fullName evidence="1">Ribonuclease PH</fullName>
        <shortName evidence="1">RNase PH</shortName>
        <ecNumber evidence="1">2.7.7.56</ecNumber>
    </recommendedName>
    <alternativeName>
        <fullName evidence="1">tRNA nucleotidyltransferase</fullName>
    </alternativeName>
</protein>
<dbReference type="EC" id="2.7.7.56" evidence="1"/>
<dbReference type="EMBL" id="BA000031">
    <property type="protein sequence ID" value="BAC58440.1"/>
    <property type="molecule type" value="Genomic_DNA"/>
</dbReference>
<dbReference type="RefSeq" id="NP_796556.1">
    <property type="nucleotide sequence ID" value="NC_004603.1"/>
</dbReference>
<dbReference type="RefSeq" id="WP_005478751.1">
    <property type="nucleotide sequence ID" value="NC_004603.1"/>
</dbReference>
<dbReference type="SMR" id="Q87T93"/>
<dbReference type="GeneID" id="1187644"/>
<dbReference type="KEGG" id="vpa:VP0177"/>
<dbReference type="PATRIC" id="fig|223926.6.peg.170"/>
<dbReference type="eggNOG" id="COG0689">
    <property type="taxonomic scope" value="Bacteria"/>
</dbReference>
<dbReference type="HOGENOM" id="CLU_050858_0_0_6"/>
<dbReference type="Proteomes" id="UP000002493">
    <property type="component" value="Chromosome 1"/>
</dbReference>
<dbReference type="GO" id="GO:0000175">
    <property type="term" value="F:3'-5'-RNA exonuclease activity"/>
    <property type="evidence" value="ECO:0007669"/>
    <property type="project" value="UniProtKB-UniRule"/>
</dbReference>
<dbReference type="GO" id="GO:0000049">
    <property type="term" value="F:tRNA binding"/>
    <property type="evidence" value="ECO:0007669"/>
    <property type="project" value="UniProtKB-UniRule"/>
</dbReference>
<dbReference type="GO" id="GO:0009022">
    <property type="term" value="F:tRNA nucleotidyltransferase activity"/>
    <property type="evidence" value="ECO:0007669"/>
    <property type="project" value="UniProtKB-UniRule"/>
</dbReference>
<dbReference type="GO" id="GO:0016075">
    <property type="term" value="P:rRNA catabolic process"/>
    <property type="evidence" value="ECO:0007669"/>
    <property type="project" value="UniProtKB-UniRule"/>
</dbReference>
<dbReference type="GO" id="GO:0006364">
    <property type="term" value="P:rRNA processing"/>
    <property type="evidence" value="ECO:0007669"/>
    <property type="project" value="UniProtKB-KW"/>
</dbReference>
<dbReference type="GO" id="GO:0008033">
    <property type="term" value="P:tRNA processing"/>
    <property type="evidence" value="ECO:0007669"/>
    <property type="project" value="UniProtKB-UniRule"/>
</dbReference>
<dbReference type="CDD" id="cd11362">
    <property type="entry name" value="RNase_PH_bact"/>
    <property type="match status" value="1"/>
</dbReference>
<dbReference type="FunFam" id="3.30.230.70:FF:000003">
    <property type="entry name" value="Ribonuclease PH"/>
    <property type="match status" value="1"/>
</dbReference>
<dbReference type="Gene3D" id="3.30.230.70">
    <property type="entry name" value="GHMP Kinase, N-terminal domain"/>
    <property type="match status" value="1"/>
</dbReference>
<dbReference type="HAMAP" id="MF_00564">
    <property type="entry name" value="RNase_PH"/>
    <property type="match status" value="1"/>
</dbReference>
<dbReference type="InterPro" id="IPR001247">
    <property type="entry name" value="ExoRNase_PH_dom1"/>
</dbReference>
<dbReference type="InterPro" id="IPR015847">
    <property type="entry name" value="ExoRNase_PH_dom2"/>
</dbReference>
<dbReference type="InterPro" id="IPR036345">
    <property type="entry name" value="ExoRNase_PH_dom2_sf"/>
</dbReference>
<dbReference type="InterPro" id="IPR027408">
    <property type="entry name" value="PNPase/RNase_PH_dom_sf"/>
</dbReference>
<dbReference type="InterPro" id="IPR020568">
    <property type="entry name" value="Ribosomal_Su5_D2-typ_SF"/>
</dbReference>
<dbReference type="InterPro" id="IPR050080">
    <property type="entry name" value="RNase_PH"/>
</dbReference>
<dbReference type="InterPro" id="IPR002381">
    <property type="entry name" value="RNase_PH_bac-type"/>
</dbReference>
<dbReference type="InterPro" id="IPR018336">
    <property type="entry name" value="RNase_PH_CS"/>
</dbReference>
<dbReference type="NCBIfam" id="TIGR01966">
    <property type="entry name" value="RNasePH"/>
    <property type="match status" value="1"/>
</dbReference>
<dbReference type="PANTHER" id="PTHR11953">
    <property type="entry name" value="EXOSOME COMPLEX COMPONENT"/>
    <property type="match status" value="1"/>
</dbReference>
<dbReference type="PANTHER" id="PTHR11953:SF0">
    <property type="entry name" value="EXOSOME COMPLEX COMPONENT RRP41"/>
    <property type="match status" value="1"/>
</dbReference>
<dbReference type="Pfam" id="PF01138">
    <property type="entry name" value="RNase_PH"/>
    <property type="match status" value="1"/>
</dbReference>
<dbReference type="Pfam" id="PF03725">
    <property type="entry name" value="RNase_PH_C"/>
    <property type="match status" value="1"/>
</dbReference>
<dbReference type="SUPFAM" id="SSF55666">
    <property type="entry name" value="Ribonuclease PH domain 2-like"/>
    <property type="match status" value="1"/>
</dbReference>
<dbReference type="SUPFAM" id="SSF54211">
    <property type="entry name" value="Ribosomal protein S5 domain 2-like"/>
    <property type="match status" value="1"/>
</dbReference>
<dbReference type="PROSITE" id="PS01277">
    <property type="entry name" value="RIBONUCLEASE_PH"/>
    <property type="match status" value="1"/>
</dbReference>
<name>RNPH_VIBPA</name>
<proteinExistence type="inferred from homology"/>